<gene>
    <name type="primary">palB</name>
    <name type="synonym">palBory</name>
    <name type="ORF">AO090005000756</name>
</gene>
<organism>
    <name type="scientific">Aspergillus oryzae (strain ATCC 42149 / RIB 40)</name>
    <name type="common">Yellow koji mold</name>
    <dbReference type="NCBI Taxonomy" id="510516"/>
    <lineage>
        <taxon>Eukaryota</taxon>
        <taxon>Fungi</taxon>
        <taxon>Dikarya</taxon>
        <taxon>Ascomycota</taxon>
        <taxon>Pezizomycotina</taxon>
        <taxon>Eurotiomycetes</taxon>
        <taxon>Eurotiomycetidae</taxon>
        <taxon>Eurotiales</taxon>
        <taxon>Aspergillaceae</taxon>
        <taxon>Aspergillus</taxon>
        <taxon>Aspergillus subgen. Circumdati</taxon>
    </lineage>
</organism>
<name>PALB_ASPOR</name>
<evidence type="ECO:0000250" key="1"/>
<evidence type="ECO:0000255" key="2">
    <source>
        <dbReference type="PROSITE-ProRule" id="PRU00239"/>
    </source>
</evidence>
<evidence type="ECO:0000305" key="3"/>
<reference key="1">
    <citation type="journal article" date="1999" name="J. Biosci. Bioeng.">
        <title>Aspergillus oryzae palBory encodes a calpain-like protease: homology to Emericella nidulans PalB and conservation of functional regions.</title>
        <authorList>
            <person name="Futai E."/>
            <person name="Sorimachi H."/>
            <person name="Jeong S.-Y."/>
            <person name="Kitamoto K."/>
            <person name="Ishiura S."/>
            <person name="Suzuki K."/>
        </authorList>
    </citation>
    <scope>NUCLEOTIDE SEQUENCE [GENOMIC DNA]</scope>
</reference>
<reference key="2">
    <citation type="journal article" date="2000" name="Fungal Genet. Biol.">
        <title>Using DNA-tagged mutagenesis to improve heterologous protein production in Aspergillus oryzae.</title>
        <authorList>
            <person name="Yaver D.S."/>
            <person name="Lamsa M."/>
            <person name="Munds R."/>
            <person name="Brown S.H."/>
            <person name="Otani S."/>
            <person name="Franssen L."/>
            <person name="Johnstone J.A."/>
            <person name="Brody H."/>
        </authorList>
    </citation>
    <scope>NUCLEOTIDE SEQUENCE [GENOMIC DNA]</scope>
</reference>
<reference key="3">
    <citation type="journal article" date="2005" name="Nature">
        <title>Genome sequencing and analysis of Aspergillus oryzae.</title>
        <authorList>
            <person name="Machida M."/>
            <person name="Asai K."/>
            <person name="Sano M."/>
            <person name="Tanaka T."/>
            <person name="Kumagai T."/>
            <person name="Terai G."/>
            <person name="Kusumoto K."/>
            <person name="Arima T."/>
            <person name="Akita O."/>
            <person name="Kashiwagi Y."/>
            <person name="Abe K."/>
            <person name="Gomi K."/>
            <person name="Horiuchi H."/>
            <person name="Kitamoto K."/>
            <person name="Kobayashi T."/>
            <person name="Takeuchi M."/>
            <person name="Denning D.W."/>
            <person name="Galagan J.E."/>
            <person name="Nierman W.C."/>
            <person name="Yu J."/>
            <person name="Archer D.B."/>
            <person name="Bennett J.W."/>
            <person name="Bhatnagar D."/>
            <person name="Cleveland T.E."/>
            <person name="Fedorova N.D."/>
            <person name="Gotoh O."/>
            <person name="Horikawa H."/>
            <person name="Hosoyama A."/>
            <person name="Ichinomiya M."/>
            <person name="Igarashi R."/>
            <person name="Iwashita K."/>
            <person name="Juvvadi P.R."/>
            <person name="Kato M."/>
            <person name="Kato Y."/>
            <person name="Kin T."/>
            <person name="Kokubun A."/>
            <person name="Maeda H."/>
            <person name="Maeyama N."/>
            <person name="Maruyama J."/>
            <person name="Nagasaki H."/>
            <person name="Nakajima T."/>
            <person name="Oda K."/>
            <person name="Okada K."/>
            <person name="Paulsen I."/>
            <person name="Sakamoto K."/>
            <person name="Sawano T."/>
            <person name="Takahashi M."/>
            <person name="Takase K."/>
            <person name="Terabayashi Y."/>
            <person name="Wortman J.R."/>
            <person name="Yamada O."/>
            <person name="Yamagata Y."/>
            <person name="Anazawa H."/>
            <person name="Hata Y."/>
            <person name="Koide Y."/>
            <person name="Komori T."/>
            <person name="Koyama Y."/>
            <person name="Minetoki T."/>
            <person name="Suharnan S."/>
            <person name="Tanaka A."/>
            <person name="Isono K."/>
            <person name="Kuhara S."/>
            <person name="Ogasawara N."/>
            <person name="Kikuchi H."/>
        </authorList>
    </citation>
    <scope>NUCLEOTIDE SEQUENCE [LARGE SCALE GENOMIC DNA]</scope>
    <source>
        <strain>ATCC 42149 / RIB 40</strain>
    </source>
</reference>
<protein>
    <recommendedName>
        <fullName>Calpain-like protease palB/RIM13</fullName>
        <ecNumber>3.4.22.-</ecNumber>
    </recommendedName>
    <alternativeName>
        <fullName>Cysteine protease palB</fullName>
    </alternativeName>
</protein>
<accession>Q9Y6Z8</accession>
<accession>Q2URN3</accession>
<keyword id="KW-0378">Hydrolase</keyword>
<keyword id="KW-0645">Protease</keyword>
<keyword id="KW-1185">Reference proteome</keyword>
<keyword id="KW-0788">Thiol protease</keyword>
<proteinExistence type="inferred from homology"/>
<dbReference type="EC" id="3.4.22.-"/>
<dbReference type="EMBL" id="AB020321">
    <property type="protein sequence ID" value="BAA77364.1"/>
    <property type="molecule type" value="Genomic_DNA"/>
</dbReference>
<dbReference type="EMBL" id="AF133087">
    <property type="protein sequence ID" value="AAD28472.1"/>
    <property type="molecule type" value="Genomic_DNA"/>
</dbReference>
<dbReference type="EMBL" id="BA000049">
    <property type="protein sequence ID" value="BAE55782.1"/>
    <property type="status" value="ALT_SEQ"/>
    <property type="molecule type" value="Genomic_DNA"/>
</dbReference>
<dbReference type="SMR" id="Q9Y6Z8"/>
<dbReference type="STRING" id="510516.Q9Y6Z8"/>
<dbReference type="MEROPS" id="C02.008"/>
<dbReference type="EnsemblFungi" id="BAE55782">
    <property type="protein sequence ID" value="BAE55782"/>
    <property type="gene ID" value="AO090005000756"/>
</dbReference>
<dbReference type="VEuPathDB" id="FungiDB:AO090005000756"/>
<dbReference type="Proteomes" id="UP000006564">
    <property type="component" value="Chromosome 1"/>
</dbReference>
<dbReference type="GO" id="GO:0004198">
    <property type="term" value="F:calcium-dependent cysteine-type endopeptidase activity"/>
    <property type="evidence" value="ECO:0007669"/>
    <property type="project" value="InterPro"/>
</dbReference>
<dbReference type="GO" id="GO:0006508">
    <property type="term" value="P:proteolysis"/>
    <property type="evidence" value="ECO:0007669"/>
    <property type="project" value="UniProtKB-KW"/>
</dbReference>
<dbReference type="CDD" id="cd00044">
    <property type="entry name" value="CysPc"/>
    <property type="match status" value="1"/>
</dbReference>
<dbReference type="CDD" id="cd02656">
    <property type="entry name" value="MIT"/>
    <property type="match status" value="1"/>
</dbReference>
<dbReference type="Gene3D" id="2.60.120.380">
    <property type="match status" value="2"/>
</dbReference>
<dbReference type="Gene3D" id="3.90.70.10">
    <property type="entry name" value="Cysteine proteinases"/>
    <property type="match status" value="1"/>
</dbReference>
<dbReference type="Gene3D" id="1.20.58.80">
    <property type="entry name" value="Phosphotransferase system, lactose/cellobiose-type IIA subunit"/>
    <property type="match status" value="1"/>
</dbReference>
<dbReference type="InterPro" id="IPR022684">
    <property type="entry name" value="Calpain_cysteine_protease"/>
</dbReference>
<dbReference type="InterPro" id="IPR022683">
    <property type="entry name" value="Calpain_III"/>
</dbReference>
<dbReference type="InterPro" id="IPR036213">
    <property type="entry name" value="Calpain_III_sf"/>
</dbReference>
<dbReference type="InterPro" id="IPR007330">
    <property type="entry name" value="MIT_dom"/>
</dbReference>
<dbReference type="InterPro" id="IPR036181">
    <property type="entry name" value="MIT_dom_sf"/>
</dbReference>
<dbReference type="InterPro" id="IPR051297">
    <property type="entry name" value="PalB/RIM13_Calpain-like"/>
</dbReference>
<dbReference type="InterPro" id="IPR038765">
    <property type="entry name" value="Papain-like_cys_pep_sf"/>
</dbReference>
<dbReference type="InterPro" id="IPR001300">
    <property type="entry name" value="Peptidase_C2_calpain_cat"/>
</dbReference>
<dbReference type="PANTHER" id="PTHR46143">
    <property type="entry name" value="CALPAIN-7"/>
    <property type="match status" value="1"/>
</dbReference>
<dbReference type="PANTHER" id="PTHR46143:SF1">
    <property type="entry name" value="CALPAIN-7"/>
    <property type="match status" value="1"/>
</dbReference>
<dbReference type="Pfam" id="PF25435">
    <property type="entry name" value="PalB_C"/>
    <property type="match status" value="1"/>
</dbReference>
<dbReference type="Pfam" id="PF00648">
    <property type="entry name" value="Peptidase_C2"/>
    <property type="match status" value="1"/>
</dbReference>
<dbReference type="PRINTS" id="PR00704">
    <property type="entry name" value="CALPAIN"/>
</dbReference>
<dbReference type="SMART" id="SM00720">
    <property type="entry name" value="calpain_III"/>
    <property type="match status" value="1"/>
</dbReference>
<dbReference type="SMART" id="SM00230">
    <property type="entry name" value="CysPc"/>
    <property type="match status" value="1"/>
</dbReference>
<dbReference type="SMART" id="SM00745">
    <property type="entry name" value="MIT"/>
    <property type="match status" value="1"/>
</dbReference>
<dbReference type="SUPFAM" id="SSF49758">
    <property type="entry name" value="Calpain large subunit, middle domain (domain III)"/>
    <property type="match status" value="2"/>
</dbReference>
<dbReference type="SUPFAM" id="SSF54001">
    <property type="entry name" value="Cysteine proteinases"/>
    <property type="match status" value="1"/>
</dbReference>
<dbReference type="SUPFAM" id="SSF116846">
    <property type="entry name" value="MIT domain"/>
    <property type="match status" value="1"/>
</dbReference>
<dbReference type="PROSITE" id="PS50203">
    <property type="entry name" value="CALPAIN_CAT"/>
    <property type="match status" value="1"/>
</dbReference>
<feature type="chain" id="PRO_0000207737" description="Calpain-like protease palB/RIM13">
    <location>
        <begin position="1"/>
        <end position="854"/>
    </location>
</feature>
<feature type="domain" description="MIT">
    <location>
        <begin position="2"/>
        <end position="83"/>
    </location>
</feature>
<feature type="domain" description="Calpain catalytic" evidence="2">
    <location>
        <begin position="118"/>
        <end position="437"/>
    </location>
</feature>
<feature type="active site" evidence="2">
    <location>
        <position position="199"/>
    </location>
</feature>
<feature type="active site" evidence="2">
    <location>
        <position position="364"/>
    </location>
</feature>
<feature type="active site" evidence="2">
    <location>
        <position position="384"/>
    </location>
</feature>
<sequence>MSRPNASAQKSFITQALKAERDVSSATSQRQALEAAIDAAEHYMKALNLASVQKDKHALDAKCKEWLTRAEKIKESKDWQAAARFHDKTVPEPRLPVSTRKLTTREEIILLEGAKLNGFIFPPWSTSPGSDEFKREDGESPFTDKPDLHLSYPQRKVFDGWKRPSELLAKDTEDVYTKVVPVMSVPGKTDLVQDMLTDCSVVASLCATTSMLERGQCTHFLPMIYPSRGSSQPSPSGKYIFRFYFNGCFRKVIIDDRLPSSKTSRSLHVIDRKNPNFLWPALVEKAYLKLRGGYDFPGSNSGTDLWVLTGWIPEQVFLHNDDVTGDQLWKRLYRSFHQGDVLLTIGTGELTEREQRELGLVSEHDYAILDMKESKGRRQLLVKNPWAGADTAPGDNGSLSASQDLPHNPPSFEPGTFWMDCEKLLQHFENLYLNWNPEIFKYREDVHFTWDLNNGRGVAGCFVNNPQFAVSTENGGIVWLLLGKHFRTTGQPERPLDEYQANEESAFISIYVFNADGKRVSLSDGALHRGPYVDSPNTLMRLEMPPRTTYTVVVSEQSLPSLNQNFTLSAFSTCPVRMAKAQDKYMCVRKIQGSWTPSTAGGNAESSRYPLNPQFRLEIENDTDVSLLLECPNTELATHVKLFWSNGNRVSRVRSRDIIADSGDYRRGGSLVEKKALEPGSYTIVCSTFAPDQLGRFTLWVSSLVPCKTSPLPPEAAGRRTVISDIGVLPPGRDRMLASLQVPRLTRIKLITRSRQSIIGSHPVGPSPVLMTVELGQGPYKQILATSEDGTHSDAVSGVRVEDFDLQPGLEESGGIWIVIERIGGPGGQVEDHFEVEALAEERVEIGEWILEDA</sequence>
<comment type="function">
    <text evidence="1">Required for the proteolytic cleavage of the transcription factor pacC in response to alkaline ambient pH. Probably is the signaling protease that mediates the first proteolytic cleavage within the signaling protease box of pacC (By similarity).</text>
</comment>
<comment type="similarity">
    <text evidence="3">Belongs to the peptidase C2 family. PalB/RIM13 subfamily.</text>
</comment>
<comment type="sequence caution" evidence="3">
    <conflict type="erroneous gene model prediction">
        <sequence resource="EMBL-CDS" id="BAE55782"/>
    </conflict>
</comment>